<name>AROA_BUCA5</name>
<keyword id="KW-0028">Amino-acid biosynthesis</keyword>
<keyword id="KW-0057">Aromatic amino acid biosynthesis</keyword>
<keyword id="KW-0963">Cytoplasm</keyword>
<keyword id="KW-0808">Transferase</keyword>
<organism>
    <name type="scientific">Buchnera aphidicola subsp. Acyrthosiphon pisum (strain 5A)</name>
    <dbReference type="NCBI Taxonomy" id="563178"/>
    <lineage>
        <taxon>Bacteria</taxon>
        <taxon>Pseudomonadati</taxon>
        <taxon>Pseudomonadota</taxon>
        <taxon>Gammaproteobacteria</taxon>
        <taxon>Enterobacterales</taxon>
        <taxon>Erwiniaceae</taxon>
        <taxon>Buchnera</taxon>
    </lineage>
</organism>
<comment type="function">
    <text evidence="1">Catalyzes the transfer of the enolpyruvyl moiety of phosphoenolpyruvate (PEP) to the 5-hydroxyl of shikimate-3-phosphate (S3P) to produce enolpyruvyl shikimate-3-phosphate and inorganic phosphate.</text>
</comment>
<comment type="catalytic activity">
    <reaction evidence="1">
        <text>3-phosphoshikimate + phosphoenolpyruvate = 5-O-(1-carboxyvinyl)-3-phosphoshikimate + phosphate</text>
        <dbReference type="Rhea" id="RHEA:21256"/>
        <dbReference type="ChEBI" id="CHEBI:43474"/>
        <dbReference type="ChEBI" id="CHEBI:57701"/>
        <dbReference type="ChEBI" id="CHEBI:58702"/>
        <dbReference type="ChEBI" id="CHEBI:145989"/>
        <dbReference type="EC" id="2.5.1.19"/>
    </reaction>
    <physiologicalReaction direction="left-to-right" evidence="1">
        <dbReference type="Rhea" id="RHEA:21257"/>
    </physiologicalReaction>
</comment>
<comment type="pathway">
    <text evidence="1">Metabolic intermediate biosynthesis; chorismate biosynthesis; chorismate from D-erythrose 4-phosphate and phosphoenolpyruvate: step 6/7.</text>
</comment>
<comment type="subunit">
    <text evidence="1">Monomer.</text>
</comment>
<comment type="subcellular location">
    <subcellularLocation>
        <location evidence="1">Cytoplasm</location>
    </subcellularLocation>
</comment>
<comment type="similarity">
    <text evidence="1">Belongs to the EPSP synthase family.</text>
</comment>
<protein>
    <recommendedName>
        <fullName evidence="1">3-phosphoshikimate 1-carboxyvinyltransferase</fullName>
        <ecNumber evidence="1">2.5.1.19</ecNumber>
    </recommendedName>
    <alternativeName>
        <fullName evidence="1">5-enolpyruvylshikimate-3-phosphate synthase</fullName>
        <shortName evidence="1">EPSP synthase</shortName>
        <shortName evidence="1">EPSPS</shortName>
    </alternativeName>
</protein>
<feature type="chain" id="PRO_1000124673" description="3-phosphoshikimate 1-carboxyvinyltransferase">
    <location>
        <begin position="1"/>
        <end position="427"/>
    </location>
</feature>
<feature type="active site" description="Proton acceptor" evidence="1">
    <location>
        <position position="314"/>
    </location>
</feature>
<feature type="binding site" evidence="1">
    <location>
        <position position="23"/>
    </location>
    <ligand>
        <name>3-phosphoshikimate</name>
        <dbReference type="ChEBI" id="CHEBI:145989"/>
    </ligand>
</feature>
<feature type="binding site" evidence="1">
    <location>
        <position position="23"/>
    </location>
    <ligand>
        <name>phosphoenolpyruvate</name>
        <dbReference type="ChEBI" id="CHEBI:58702"/>
    </ligand>
</feature>
<feature type="binding site" evidence="1">
    <location>
        <position position="24"/>
    </location>
    <ligand>
        <name>3-phosphoshikimate</name>
        <dbReference type="ChEBI" id="CHEBI:145989"/>
    </ligand>
</feature>
<feature type="binding site" evidence="1">
    <location>
        <position position="28"/>
    </location>
    <ligand>
        <name>3-phosphoshikimate</name>
        <dbReference type="ChEBI" id="CHEBI:145989"/>
    </ligand>
</feature>
<feature type="binding site" evidence="1">
    <location>
        <position position="97"/>
    </location>
    <ligand>
        <name>phosphoenolpyruvate</name>
        <dbReference type="ChEBI" id="CHEBI:58702"/>
    </ligand>
</feature>
<feature type="binding site" evidence="1">
    <location>
        <position position="125"/>
    </location>
    <ligand>
        <name>phosphoenolpyruvate</name>
        <dbReference type="ChEBI" id="CHEBI:58702"/>
    </ligand>
</feature>
<feature type="binding site" evidence="1">
    <location>
        <position position="170"/>
    </location>
    <ligand>
        <name>3-phosphoshikimate</name>
        <dbReference type="ChEBI" id="CHEBI:145989"/>
    </ligand>
</feature>
<feature type="binding site" evidence="1">
    <location>
        <position position="171"/>
    </location>
    <ligand>
        <name>3-phosphoshikimate</name>
        <dbReference type="ChEBI" id="CHEBI:145989"/>
    </ligand>
</feature>
<feature type="binding site" evidence="1">
    <location>
        <position position="172"/>
    </location>
    <ligand>
        <name>3-phosphoshikimate</name>
        <dbReference type="ChEBI" id="CHEBI:145989"/>
    </ligand>
</feature>
<feature type="binding site" evidence="1">
    <location>
        <position position="172"/>
    </location>
    <ligand>
        <name>phosphoenolpyruvate</name>
        <dbReference type="ChEBI" id="CHEBI:58702"/>
    </ligand>
</feature>
<feature type="binding site" evidence="1">
    <location>
        <position position="198"/>
    </location>
    <ligand>
        <name>3-phosphoshikimate</name>
        <dbReference type="ChEBI" id="CHEBI:145989"/>
    </ligand>
</feature>
<feature type="binding site" evidence="1">
    <location>
        <position position="314"/>
    </location>
    <ligand>
        <name>3-phosphoshikimate</name>
        <dbReference type="ChEBI" id="CHEBI:145989"/>
    </ligand>
</feature>
<feature type="binding site" evidence="1">
    <location>
        <position position="337"/>
    </location>
    <ligand>
        <name>3-phosphoshikimate</name>
        <dbReference type="ChEBI" id="CHEBI:145989"/>
    </ligand>
</feature>
<feature type="binding site" evidence="1">
    <location>
        <position position="341"/>
    </location>
    <ligand>
        <name>3-phosphoshikimate</name>
        <dbReference type="ChEBI" id="CHEBI:145989"/>
    </ligand>
</feature>
<feature type="binding site" evidence="1">
    <location>
        <position position="345"/>
    </location>
    <ligand>
        <name>phosphoenolpyruvate</name>
        <dbReference type="ChEBI" id="CHEBI:58702"/>
    </ligand>
</feature>
<feature type="binding site" evidence="1">
    <location>
        <position position="387"/>
    </location>
    <ligand>
        <name>phosphoenolpyruvate</name>
        <dbReference type="ChEBI" id="CHEBI:58702"/>
    </ligand>
</feature>
<feature type="binding site" evidence="1">
    <location>
        <position position="412"/>
    </location>
    <ligand>
        <name>phosphoenolpyruvate</name>
        <dbReference type="ChEBI" id="CHEBI:58702"/>
    </ligand>
</feature>
<accession>B8D9A1</accession>
<evidence type="ECO:0000255" key="1">
    <source>
        <dbReference type="HAMAP-Rule" id="MF_00210"/>
    </source>
</evidence>
<sequence>MQNSLDLKPISHVNGTVCLPGSKSISNRVLLLSSIAKGTTCLTNLLNSHDTQHMLNALKKLGVRYNLSDDKKTCHVQGIGGPFHLSEAISLYLGNAGTAIRPLLSVLSLHKNNILLNGDDRMHERPIGDLVDALIQGGAVIEYKKNKGYPPICTKGGFLGGSIFLNGNISSQFLTSLLISTPLALKDTTIFIKGNLVSKPYIDITLNLIKIFGVNIEHDSYNVFYIKGKQQYKTPGKYTIEGDASSASYFLAAAAIKGGSIKVTGVGKKSIQGDIEFANILEKMGATIFWEDYSITCTRNKLNAIDLDMNHIPDAAMTVAILALFSKGTTIIRNIYNWRVKETDRLSAMTIELRKIGAIVEEGRDFLSISPPIFFQYSSIETYNDHRMAMCFSLISLSGVGVNILNPNCISKTFPSYFKDFLSISKI</sequence>
<reference key="1">
    <citation type="journal article" date="2009" name="Science">
        <title>The dynamics and time scale of ongoing genomic erosion in symbiotic bacteria.</title>
        <authorList>
            <person name="Moran N.A."/>
            <person name="McLaughlin H.J."/>
            <person name="Sorek R."/>
        </authorList>
    </citation>
    <scope>NUCLEOTIDE SEQUENCE [LARGE SCALE GENOMIC DNA]</scope>
    <source>
        <strain>5A</strain>
    </source>
</reference>
<gene>
    <name evidence="1" type="primary">aroA</name>
    <name type="ordered locus">BUAP5A_304</name>
</gene>
<proteinExistence type="inferred from homology"/>
<dbReference type="EC" id="2.5.1.19" evidence="1"/>
<dbReference type="EMBL" id="CP001161">
    <property type="protein sequence ID" value="ACL30672.1"/>
    <property type="molecule type" value="Genomic_DNA"/>
</dbReference>
<dbReference type="RefSeq" id="WP_009874265.1">
    <property type="nucleotide sequence ID" value="NC_011833.1"/>
</dbReference>
<dbReference type="SMR" id="B8D9A1"/>
<dbReference type="KEGG" id="bap:BUAP5A_304"/>
<dbReference type="HOGENOM" id="CLU_024321_0_0_6"/>
<dbReference type="OrthoDB" id="9809920at2"/>
<dbReference type="UniPathway" id="UPA00053">
    <property type="reaction ID" value="UER00089"/>
</dbReference>
<dbReference type="Proteomes" id="UP000006904">
    <property type="component" value="Chromosome"/>
</dbReference>
<dbReference type="GO" id="GO:0005737">
    <property type="term" value="C:cytoplasm"/>
    <property type="evidence" value="ECO:0007669"/>
    <property type="project" value="UniProtKB-SubCell"/>
</dbReference>
<dbReference type="GO" id="GO:0003866">
    <property type="term" value="F:3-phosphoshikimate 1-carboxyvinyltransferase activity"/>
    <property type="evidence" value="ECO:0007669"/>
    <property type="project" value="UniProtKB-UniRule"/>
</dbReference>
<dbReference type="GO" id="GO:0008652">
    <property type="term" value="P:amino acid biosynthetic process"/>
    <property type="evidence" value="ECO:0007669"/>
    <property type="project" value="UniProtKB-KW"/>
</dbReference>
<dbReference type="GO" id="GO:0009073">
    <property type="term" value="P:aromatic amino acid family biosynthetic process"/>
    <property type="evidence" value="ECO:0007669"/>
    <property type="project" value="UniProtKB-KW"/>
</dbReference>
<dbReference type="GO" id="GO:0009423">
    <property type="term" value="P:chorismate biosynthetic process"/>
    <property type="evidence" value="ECO:0007669"/>
    <property type="project" value="UniProtKB-UniRule"/>
</dbReference>
<dbReference type="CDD" id="cd01556">
    <property type="entry name" value="EPSP_synthase"/>
    <property type="match status" value="1"/>
</dbReference>
<dbReference type="FunFam" id="3.65.10.10:FF:000003">
    <property type="entry name" value="3-phosphoshikimate 1-carboxyvinyltransferase"/>
    <property type="match status" value="1"/>
</dbReference>
<dbReference type="FunFam" id="3.65.10.10:FF:000004">
    <property type="entry name" value="3-phosphoshikimate 1-carboxyvinyltransferase"/>
    <property type="match status" value="1"/>
</dbReference>
<dbReference type="Gene3D" id="3.65.10.10">
    <property type="entry name" value="Enolpyruvate transferase domain"/>
    <property type="match status" value="2"/>
</dbReference>
<dbReference type="HAMAP" id="MF_00210">
    <property type="entry name" value="EPSP_synth"/>
    <property type="match status" value="1"/>
</dbReference>
<dbReference type="InterPro" id="IPR001986">
    <property type="entry name" value="Enolpyruvate_Tfrase_dom"/>
</dbReference>
<dbReference type="InterPro" id="IPR036968">
    <property type="entry name" value="Enolpyruvate_Tfrase_sf"/>
</dbReference>
<dbReference type="InterPro" id="IPR006264">
    <property type="entry name" value="EPSP_synthase"/>
</dbReference>
<dbReference type="InterPro" id="IPR023193">
    <property type="entry name" value="EPSP_synthase_CS"/>
</dbReference>
<dbReference type="InterPro" id="IPR013792">
    <property type="entry name" value="RNA3'P_cycl/enolpyr_Trfase_a/b"/>
</dbReference>
<dbReference type="NCBIfam" id="TIGR01356">
    <property type="entry name" value="aroA"/>
    <property type="match status" value="1"/>
</dbReference>
<dbReference type="PANTHER" id="PTHR21090">
    <property type="entry name" value="AROM/DEHYDROQUINATE SYNTHASE"/>
    <property type="match status" value="1"/>
</dbReference>
<dbReference type="PANTHER" id="PTHR21090:SF5">
    <property type="entry name" value="PENTAFUNCTIONAL AROM POLYPEPTIDE"/>
    <property type="match status" value="1"/>
</dbReference>
<dbReference type="Pfam" id="PF00275">
    <property type="entry name" value="EPSP_synthase"/>
    <property type="match status" value="1"/>
</dbReference>
<dbReference type="PIRSF" id="PIRSF000505">
    <property type="entry name" value="EPSPS"/>
    <property type="match status" value="1"/>
</dbReference>
<dbReference type="SUPFAM" id="SSF55205">
    <property type="entry name" value="EPT/RTPC-like"/>
    <property type="match status" value="1"/>
</dbReference>
<dbReference type="PROSITE" id="PS00104">
    <property type="entry name" value="EPSP_SYNTHASE_1"/>
    <property type="match status" value="1"/>
</dbReference>
<dbReference type="PROSITE" id="PS00885">
    <property type="entry name" value="EPSP_SYNTHASE_2"/>
    <property type="match status" value="1"/>
</dbReference>